<dbReference type="EC" id="6.2.1.1" evidence="1"/>
<dbReference type="EMBL" id="AE017223">
    <property type="protein sequence ID" value="AAX75108.1"/>
    <property type="molecule type" value="Genomic_DNA"/>
</dbReference>
<dbReference type="SMR" id="Q57B76"/>
<dbReference type="EnsemblBacteria" id="AAX75108">
    <property type="protein sequence ID" value="AAX75108"/>
    <property type="gene ID" value="BruAb1_1791"/>
</dbReference>
<dbReference type="KEGG" id="bmb:BruAb1_1791"/>
<dbReference type="HOGENOM" id="CLU_000022_3_6_5"/>
<dbReference type="Proteomes" id="UP000000540">
    <property type="component" value="Chromosome I"/>
</dbReference>
<dbReference type="GO" id="GO:0005829">
    <property type="term" value="C:cytosol"/>
    <property type="evidence" value="ECO:0007669"/>
    <property type="project" value="TreeGrafter"/>
</dbReference>
<dbReference type="GO" id="GO:0003987">
    <property type="term" value="F:acetate-CoA ligase activity"/>
    <property type="evidence" value="ECO:0007669"/>
    <property type="project" value="UniProtKB-UniRule"/>
</dbReference>
<dbReference type="GO" id="GO:0016208">
    <property type="term" value="F:AMP binding"/>
    <property type="evidence" value="ECO:0007669"/>
    <property type="project" value="InterPro"/>
</dbReference>
<dbReference type="GO" id="GO:0005524">
    <property type="term" value="F:ATP binding"/>
    <property type="evidence" value="ECO:0007669"/>
    <property type="project" value="UniProtKB-KW"/>
</dbReference>
<dbReference type="GO" id="GO:0046872">
    <property type="term" value="F:metal ion binding"/>
    <property type="evidence" value="ECO:0007669"/>
    <property type="project" value="UniProtKB-KW"/>
</dbReference>
<dbReference type="GO" id="GO:0019427">
    <property type="term" value="P:acetyl-CoA biosynthetic process from acetate"/>
    <property type="evidence" value="ECO:0007669"/>
    <property type="project" value="InterPro"/>
</dbReference>
<dbReference type="CDD" id="cd05966">
    <property type="entry name" value="ACS"/>
    <property type="match status" value="1"/>
</dbReference>
<dbReference type="FunFam" id="3.30.300.30:FF:000004">
    <property type="entry name" value="Acetyl-coenzyme A synthetase"/>
    <property type="match status" value="1"/>
</dbReference>
<dbReference type="FunFam" id="3.40.50.12780:FF:000001">
    <property type="entry name" value="Acetyl-coenzyme A synthetase"/>
    <property type="match status" value="1"/>
</dbReference>
<dbReference type="Gene3D" id="3.30.300.30">
    <property type="match status" value="1"/>
</dbReference>
<dbReference type="Gene3D" id="3.40.50.12780">
    <property type="entry name" value="N-terminal domain of ligase-like"/>
    <property type="match status" value="1"/>
</dbReference>
<dbReference type="HAMAP" id="MF_01123">
    <property type="entry name" value="Ac_CoA_synth"/>
    <property type="match status" value="1"/>
</dbReference>
<dbReference type="InterPro" id="IPR011904">
    <property type="entry name" value="Ac_CoA_lig"/>
</dbReference>
<dbReference type="InterPro" id="IPR032387">
    <property type="entry name" value="ACAS_N"/>
</dbReference>
<dbReference type="InterPro" id="IPR025110">
    <property type="entry name" value="AMP-bd_C"/>
</dbReference>
<dbReference type="InterPro" id="IPR045851">
    <property type="entry name" value="AMP-bd_C_sf"/>
</dbReference>
<dbReference type="InterPro" id="IPR020845">
    <property type="entry name" value="AMP-binding_CS"/>
</dbReference>
<dbReference type="InterPro" id="IPR000873">
    <property type="entry name" value="AMP-dep_synth/lig_dom"/>
</dbReference>
<dbReference type="InterPro" id="IPR042099">
    <property type="entry name" value="ANL_N_sf"/>
</dbReference>
<dbReference type="NCBIfam" id="TIGR02188">
    <property type="entry name" value="Ac_CoA_lig_AcsA"/>
    <property type="match status" value="1"/>
</dbReference>
<dbReference type="NCBIfam" id="NF001208">
    <property type="entry name" value="PRK00174.1"/>
    <property type="match status" value="1"/>
</dbReference>
<dbReference type="PANTHER" id="PTHR24095">
    <property type="entry name" value="ACETYL-COENZYME A SYNTHETASE"/>
    <property type="match status" value="1"/>
</dbReference>
<dbReference type="PANTHER" id="PTHR24095:SF14">
    <property type="entry name" value="ACETYL-COENZYME A SYNTHETASE 1"/>
    <property type="match status" value="1"/>
</dbReference>
<dbReference type="Pfam" id="PF16177">
    <property type="entry name" value="ACAS_N"/>
    <property type="match status" value="1"/>
</dbReference>
<dbReference type="Pfam" id="PF00501">
    <property type="entry name" value="AMP-binding"/>
    <property type="match status" value="1"/>
</dbReference>
<dbReference type="Pfam" id="PF13193">
    <property type="entry name" value="AMP-binding_C"/>
    <property type="match status" value="1"/>
</dbReference>
<dbReference type="SUPFAM" id="SSF56801">
    <property type="entry name" value="Acetyl-CoA synthetase-like"/>
    <property type="match status" value="1"/>
</dbReference>
<dbReference type="PROSITE" id="PS00455">
    <property type="entry name" value="AMP_BINDING"/>
    <property type="match status" value="1"/>
</dbReference>
<gene>
    <name evidence="1" type="primary">acsA</name>
    <name type="ordered locus">BruAb1_1791</name>
</gene>
<evidence type="ECO:0000255" key="1">
    <source>
        <dbReference type="HAMAP-Rule" id="MF_01123"/>
    </source>
</evidence>
<sequence length="651" mass="72731">MSEKLYPVLPEAKKNTLIDNETYLEWYEESVSDPDGFWAKHGRRIDWFKPFTKVKNTDFNGDVTIKWYEDGVTNVSYNCIDRHLKSRGDKVAIIWEGDNPYIDKKITYRELYENVCRMANVLKKHGVKKGDRVTIYLPMIPEAAYAMLACARIGAVHSVVFAGFSPEALAGRIVDCESTFVITADEGVRGGKPVALKENTDTAIDIAAKQYVMVNKVLVVRRTGGKVSWGRGRDLWYHQEVASVEPHCEPEPMNAEDPLFILYTSGSTGKPKGVLHTTGGYLVYASMTHQYVFDYHDGEIYWCTADVGWVTGHSYIVYGPLANGATTLMFEGVPNFPDQGRFWEVVDKHHVNIFYTAPTALRALMGAGDEFVTRSSRSTLRLLGSVGEPINPEAWEWYYNVVGDQKCPIVDTWWQTENGGILITPLPGATDLKPGSATRPFFGVKPVLVDNEGNVQEGVADGNLCISDSWPGQMRTVYGDHKRFIETYFSTYKGMYFSGDGCRRDEDGYYWITGRVDDVLNISGHRLGTAEIESALVSHHSVSEAAVVGYPHPIKGQGIYCYVTLMTGADAQDPDELRKELVQHVRKEIGPIATPDKIQFAPGLPKTRSGKIMRRILRKIAEDEFGALGDTSTLADPGVVDDLIENRQNKK</sequence>
<keyword id="KW-0007">Acetylation</keyword>
<keyword id="KW-0067">ATP-binding</keyword>
<keyword id="KW-0436">Ligase</keyword>
<keyword id="KW-0460">Magnesium</keyword>
<keyword id="KW-0479">Metal-binding</keyword>
<keyword id="KW-0547">Nucleotide-binding</keyword>
<accession>Q57B76</accession>
<protein>
    <recommendedName>
        <fullName evidence="1">Acetyl-coenzyme A synthetase</fullName>
        <shortName evidence="1">AcCoA synthetase</shortName>
        <shortName evidence="1">Acs</shortName>
        <ecNumber evidence="1">6.2.1.1</ecNumber>
    </recommendedName>
    <alternativeName>
        <fullName evidence="1">Acetate--CoA ligase</fullName>
    </alternativeName>
    <alternativeName>
        <fullName evidence="1">Acyl-activating enzyme</fullName>
    </alternativeName>
</protein>
<organism>
    <name type="scientific">Brucella abortus biovar 1 (strain 9-941)</name>
    <dbReference type="NCBI Taxonomy" id="262698"/>
    <lineage>
        <taxon>Bacteria</taxon>
        <taxon>Pseudomonadati</taxon>
        <taxon>Pseudomonadota</taxon>
        <taxon>Alphaproteobacteria</taxon>
        <taxon>Hyphomicrobiales</taxon>
        <taxon>Brucellaceae</taxon>
        <taxon>Brucella/Ochrobactrum group</taxon>
        <taxon>Brucella</taxon>
    </lineage>
</organism>
<comment type="function">
    <text evidence="1">Catalyzes the conversion of acetate into acetyl-CoA (AcCoA), an essential intermediate at the junction of anabolic and catabolic pathways. AcsA undergoes a two-step reaction. In the first half reaction, AcsA combines acetate with ATP to form acetyl-adenylate (AcAMP) intermediate. In the second half reaction, it can then transfer the acetyl group from AcAMP to the sulfhydryl group of CoA, forming the product AcCoA.</text>
</comment>
<comment type="catalytic activity">
    <reaction evidence="1">
        <text>acetate + ATP + CoA = acetyl-CoA + AMP + diphosphate</text>
        <dbReference type="Rhea" id="RHEA:23176"/>
        <dbReference type="ChEBI" id="CHEBI:30089"/>
        <dbReference type="ChEBI" id="CHEBI:30616"/>
        <dbReference type="ChEBI" id="CHEBI:33019"/>
        <dbReference type="ChEBI" id="CHEBI:57287"/>
        <dbReference type="ChEBI" id="CHEBI:57288"/>
        <dbReference type="ChEBI" id="CHEBI:456215"/>
        <dbReference type="EC" id="6.2.1.1"/>
    </reaction>
</comment>
<comment type="cofactor">
    <cofactor evidence="1">
        <name>Mg(2+)</name>
        <dbReference type="ChEBI" id="CHEBI:18420"/>
    </cofactor>
</comment>
<comment type="PTM">
    <text evidence="1">Acetylated. Deacetylation by the SIR2-homolog deacetylase activates the enzyme.</text>
</comment>
<comment type="similarity">
    <text evidence="1">Belongs to the ATP-dependent AMP-binding enzyme family.</text>
</comment>
<proteinExistence type="inferred from homology"/>
<reference key="1">
    <citation type="journal article" date="2005" name="J. Bacteriol.">
        <title>Completion of the genome sequence of Brucella abortus and comparison to the highly similar genomes of Brucella melitensis and Brucella suis.</title>
        <authorList>
            <person name="Halling S.M."/>
            <person name="Peterson-Burch B.D."/>
            <person name="Bricker B.J."/>
            <person name="Zuerner R.L."/>
            <person name="Qing Z."/>
            <person name="Li L.-L."/>
            <person name="Kapur V."/>
            <person name="Alt D.P."/>
            <person name="Olsen S.C."/>
        </authorList>
    </citation>
    <scope>NUCLEOTIDE SEQUENCE [LARGE SCALE GENOMIC DNA]</scope>
    <source>
        <strain>9-941</strain>
    </source>
</reference>
<feature type="chain" id="PRO_1000065275" description="Acetyl-coenzyme A synthetase">
    <location>
        <begin position="1"/>
        <end position="651"/>
    </location>
</feature>
<feature type="binding site" evidence="1">
    <location>
        <begin position="189"/>
        <end position="192"/>
    </location>
    <ligand>
        <name>CoA</name>
        <dbReference type="ChEBI" id="CHEBI:57287"/>
    </ligand>
</feature>
<feature type="binding site" evidence="1">
    <location>
        <position position="311"/>
    </location>
    <ligand>
        <name>CoA</name>
        <dbReference type="ChEBI" id="CHEBI:57287"/>
    </ligand>
</feature>
<feature type="binding site" evidence="1">
    <location>
        <position position="335"/>
    </location>
    <ligand>
        <name>CoA</name>
        <dbReference type="ChEBI" id="CHEBI:57287"/>
    </ligand>
</feature>
<feature type="binding site" evidence="1">
    <location>
        <begin position="387"/>
        <end position="389"/>
    </location>
    <ligand>
        <name>ATP</name>
        <dbReference type="ChEBI" id="CHEBI:30616"/>
    </ligand>
</feature>
<feature type="binding site" evidence="1">
    <location>
        <begin position="411"/>
        <end position="416"/>
    </location>
    <ligand>
        <name>ATP</name>
        <dbReference type="ChEBI" id="CHEBI:30616"/>
    </ligand>
</feature>
<feature type="binding site" evidence="1">
    <location>
        <position position="500"/>
    </location>
    <ligand>
        <name>ATP</name>
        <dbReference type="ChEBI" id="CHEBI:30616"/>
    </ligand>
</feature>
<feature type="binding site" evidence="1">
    <location>
        <position position="515"/>
    </location>
    <ligand>
        <name>ATP</name>
        <dbReference type="ChEBI" id="CHEBI:30616"/>
    </ligand>
</feature>
<feature type="binding site" evidence="1">
    <location>
        <position position="523"/>
    </location>
    <ligand>
        <name>CoA</name>
        <dbReference type="ChEBI" id="CHEBI:57287"/>
    </ligand>
</feature>
<feature type="binding site" evidence="1">
    <location>
        <position position="526"/>
    </location>
    <ligand>
        <name>ATP</name>
        <dbReference type="ChEBI" id="CHEBI:30616"/>
    </ligand>
</feature>
<feature type="binding site" evidence="1">
    <location>
        <position position="537"/>
    </location>
    <ligand>
        <name>Mg(2+)</name>
        <dbReference type="ChEBI" id="CHEBI:18420"/>
    </ligand>
</feature>
<feature type="binding site" evidence="1">
    <location>
        <position position="539"/>
    </location>
    <ligand>
        <name>Mg(2+)</name>
        <dbReference type="ChEBI" id="CHEBI:18420"/>
    </ligand>
</feature>
<feature type="binding site" evidence="1">
    <location>
        <position position="542"/>
    </location>
    <ligand>
        <name>Mg(2+)</name>
        <dbReference type="ChEBI" id="CHEBI:18420"/>
    </ligand>
</feature>
<feature type="binding site">
    <location>
        <position position="586"/>
    </location>
    <ligand>
        <name>CoA</name>
        <dbReference type="ChEBI" id="CHEBI:57287"/>
    </ligand>
</feature>
<feature type="modified residue" description="N6-acetyllysine" evidence="1">
    <location>
        <position position="611"/>
    </location>
</feature>
<name>ACSA_BRUAB</name>